<organism>
    <name type="scientific">Shewanella baltica (strain OS223)</name>
    <dbReference type="NCBI Taxonomy" id="407976"/>
    <lineage>
        <taxon>Bacteria</taxon>
        <taxon>Pseudomonadati</taxon>
        <taxon>Pseudomonadota</taxon>
        <taxon>Gammaproteobacteria</taxon>
        <taxon>Alteromonadales</taxon>
        <taxon>Shewanellaceae</taxon>
        <taxon>Shewanella</taxon>
    </lineage>
</organism>
<keyword id="KW-0997">Cell inner membrane</keyword>
<keyword id="KW-1003">Cell membrane</keyword>
<keyword id="KW-0472">Membrane</keyword>
<keyword id="KW-0812">Transmembrane</keyword>
<keyword id="KW-1133">Transmembrane helix</keyword>
<dbReference type="EMBL" id="CP001252">
    <property type="protein sequence ID" value="ACK44856.1"/>
    <property type="molecule type" value="Genomic_DNA"/>
</dbReference>
<dbReference type="RefSeq" id="WP_012586534.1">
    <property type="nucleotide sequence ID" value="NC_011663.1"/>
</dbReference>
<dbReference type="KEGG" id="sbp:Sbal223_0320"/>
<dbReference type="HOGENOM" id="CLU_032288_0_0_6"/>
<dbReference type="Proteomes" id="UP000002507">
    <property type="component" value="Chromosome"/>
</dbReference>
<dbReference type="GO" id="GO:0005886">
    <property type="term" value="C:plasma membrane"/>
    <property type="evidence" value="ECO:0007669"/>
    <property type="project" value="UniProtKB-SubCell"/>
</dbReference>
<dbReference type="HAMAP" id="MF_00672">
    <property type="entry name" value="UPF0761"/>
    <property type="match status" value="1"/>
</dbReference>
<dbReference type="InterPro" id="IPR023679">
    <property type="entry name" value="UPF0761_bac"/>
</dbReference>
<dbReference type="InterPro" id="IPR017039">
    <property type="entry name" value="Virul_fac_BrkB"/>
</dbReference>
<dbReference type="NCBIfam" id="NF002457">
    <property type="entry name" value="PRK01637.1"/>
    <property type="match status" value="1"/>
</dbReference>
<dbReference type="NCBIfam" id="TIGR00765">
    <property type="entry name" value="yihY_not_rbn"/>
    <property type="match status" value="1"/>
</dbReference>
<dbReference type="PANTHER" id="PTHR30213">
    <property type="entry name" value="INNER MEMBRANE PROTEIN YHJD"/>
    <property type="match status" value="1"/>
</dbReference>
<dbReference type="PANTHER" id="PTHR30213:SF0">
    <property type="entry name" value="UPF0761 MEMBRANE PROTEIN YIHY"/>
    <property type="match status" value="1"/>
</dbReference>
<dbReference type="Pfam" id="PF03631">
    <property type="entry name" value="Virul_fac_BrkB"/>
    <property type="match status" value="1"/>
</dbReference>
<dbReference type="PIRSF" id="PIRSF035875">
    <property type="entry name" value="RNase_BN"/>
    <property type="match status" value="1"/>
</dbReference>
<evidence type="ECO:0000255" key="1">
    <source>
        <dbReference type="HAMAP-Rule" id="MF_00672"/>
    </source>
</evidence>
<proteinExistence type="inferred from homology"/>
<name>Y320_SHEB2</name>
<accession>B8E4B5</accession>
<protein>
    <recommendedName>
        <fullName evidence="1">UPF0761 membrane protein Sbal223_0320</fullName>
    </recommendedName>
</protein>
<comment type="subcellular location">
    <subcellularLocation>
        <location evidence="1">Cell inner membrane</location>
        <topology evidence="1">Multi-pass membrane protein</topology>
    </subcellularLocation>
</comment>
<comment type="similarity">
    <text evidence="1">Belongs to the UPF0761 family.</text>
</comment>
<feature type="chain" id="PRO_1000147670" description="UPF0761 membrane protein Sbal223_0320">
    <location>
        <begin position="1"/>
        <end position="323"/>
    </location>
</feature>
<feature type="transmembrane region" description="Helical" evidence="1">
    <location>
        <begin position="4"/>
        <end position="24"/>
    </location>
</feature>
<feature type="transmembrane region" description="Helical" evidence="1">
    <location>
        <begin position="45"/>
        <end position="65"/>
    </location>
</feature>
<feature type="transmembrane region" description="Helical" evidence="1">
    <location>
        <begin position="102"/>
        <end position="122"/>
    </location>
</feature>
<feature type="transmembrane region" description="Helical" evidence="1">
    <location>
        <begin position="137"/>
        <end position="157"/>
    </location>
</feature>
<feature type="transmembrane region" description="Helical" evidence="1">
    <location>
        <begin position="182"/>
        <end position="202"/>
    </location>
</feature>
<feature type="transmembrane region" description="Helical" evidence="1">
    <location>
        <begin position="213"/>
        <end position="233"/>
    </location>
</feature>
<feature type="transmembrane region" description="Helical" evidence="1">
    <location>
        <begin position="247"/>
        <end position="267"/>
    </location>
</feature>
<reference key="1">
    <citation type="submission" date="2008-12" db="EMBL/GenBank/DDBJ databases">
        <title>Complete sequence of chromosome of Shewanella baltica OS223.</title>
        <authorList>
            <consortium name="US DOE Joint Genome Institute"/>
            <person name="Lucas S."/>
            <person name="Copeland A."/>
            <person name="Lapidus A."/>
            <person name="Glavina del Rio T."/>
            <person name="Dalin E."/>
            <person name="Tice H."/>
            <person name="Bruce D."/>
            <person name="Goodwin L."/>
            <person name="Pitluck S."/>
            <person name="Chertkov O."/>
            <person name="Meincke L."/>
            <person name="Brettin T."/>
            <person name="Detter J.C."/>
            <person name="Han C."/>
            <person name="Kuske C.R."/>
            <person name="Larimer F."/>
            <person name="Land M."/>
            <person name="Hauser L."/>
            <person name="Kyrpides N."/>
            <person name="Ovchinnikova G."/>
            <person name="Brettar I."/>
            <person name="Rodrigues J."/>
            <person name="Konstantinidis K."/>
            <person name="Tiedje J."/>
        </authorList>
    </citation>
    <scope>NUCLEOTIDE SEQUENCE [LARGE SCALE GENOMIC DNA]</scope>
    <source>
        <strain>OS223</strain>
    </source>
</reference>
<sequence length="323" mass="35239">MTKKIELAQIRVLFLGIWHFLLHLRRRLVEDQINIRAGHLAYVTLLSLVPMVAVTMSMLSAFPVFKGIRGQIEGFVYENFLPAAGDTVQVYINEFVGNASKGTAVGISALVVVAIMLISAIDKSLNNIWRTKEKRSVVVAFSMYWMVLTLGPVLVGASLVASSYVISLKVFEAEALSGMLPIFIARLPMLFSVAAFLLLYMVVPNQKVKFLHALLGAIVAALLFELGKKGFALYVTQFPSYEAIYGALATIPIVFVWVYLSWMIVLLGAEITAAMPEYLDYESSSDDETALNAKPLADASQGDSSSVLTSAEVTALKAVAKSE</sequence>
<gene>
    <name type="ordered locus">Sbal223_0320</name>
</gene>